<sequence>MLLATFKLCAGSSYRHVRSMKGLQQQAVLAIGQELNRRALGGPAPAAWINQVRRRGSLLGSQLEDPLYSDQELAYIQQGEEAMQRALGILKDQEGWKKESRQANGDEVLSKVIPDVGKVFRLEVVVDQPMERLYEELVERMEAMGEWNPNVKEIKVLQKIGKDTVITHELAAEVAGNLVGPRDFVSVRCTKRRGSMCVLAGMATLYEEMPQQKGVIRAEHGPTCMVLRPLAGSPSRTKLTWLLSIDLKGWLPKTIINQVLSQTQVDFANHLRKRLESCPALEARC</sequence>
<proteinExistence type="evidence at protein level"/>
<comment type="function">
    <text evidence="2">Plays a key role in steroid hormone synthesis by enhancing the metabolism of cholesterol into pregnenolone. Mediates the transfer of cholesterol from the outer mitochondrial membrane to the inner mitochondrial membrane where it is cleaved to pregnenolone (By similarity).</text>
</comment>
<comment type="catalytic activity">
    <reaction evidence="2">
        <text>cholesterol(in) = cholesterol(out)</text>
        <dbReference type="Rhea" id="RHEA:39747"/>
        <dbReference type="ChEBI" id="CHEBI:16113"/>
    </reaction>
</comment>
<comment type="pathway">
    <text evidence="2">Steroid metabolism; cholesterol metabolism.</text>
</comment>
<comment type="subunit">
    <text evidence="4">May interact with TSPO.</text>
</comment>
<comment type="subcellular location">
    <subcellularLocation>
        <location evidence="3">Mitochondrion</location>
    </subcellularLocation>
</comment>
<comment type="tissue specificity">
    <text>Corpus luteum and adrenal gland.</text>
</comment>
<evidence type="ECO:0000250" key="1"/>
<evidence type="ECO:0000250" key="2">
    <source>
        <dbReference type="UniProtKB" id="P49675"/>
    </source>
</evidence>
<evidence type="ECO:0000250" key="3">
    <source>
        <dbReference type="UniProtKB" id="P51557"/>
    </source>
</evidence>
<evidence type="ECO:0000250" key="4">
    <source>
        <dbReference type="UniProtKB" id="P79245"/>
    </source>
</evidence>
<evidence type="ECO:0000255" key="5">
    <source>
        <dbReference type="PROSITE-ProRule" id="PRU00197"/>
    </source>
</evidence>
<evidence type="ECO:0000305" key="6"/>
<dbReference type="EMBL" id="Y17259">
    <property type="protein sequence ID" value="CAA76717.1"/>
    <property type="molecule type" value="mRNA"/>
</dbReference>
<dbReference type="EMBL" id="Y17260">
    <property type="protein sequence ID" value="CAA76718.1"/>
    <property type="molecule type" value="Genomic_DNA"/>
</dbReference>
<dbReference type="EMBL" id="BC110213">
    <property type="protein sequence ID" value="AAI10214.1"/>
    <property type="molecule type" value="mRNA"/>
</dbReference>
<dbReference type="PIR" id="JC4315">
    <property type="entry name" value="JC4315"/>
</dbReference>
<dbReference type="RefSeq" id="NP_776614.2">
    <property type="nucleotide sequence ID" value="NM_174189.3"/>
</dbReference>
<dbReference type="SMR" id="Q28918"/>
<dbReference type="FunCoup" id="Q28918">
    <property type="interactions" value="556"/>
</dbReference>
<dbReference type="STRING" id="9913.ENSBTAP00000044633"/>
<dbReference type="PaxDb" id="9913-ENSBTAP00000044633"/>
<dbReference type="GeneID" id="281507"/>
<dbReference type="KEGG" id="bta:281507"/>
<dbReference type="CTD" id="6770"/>
<dbReference type="VEuPathDB" id="HostDB:ENSBTAG00000033345"/>
<dbReference type="eggNOG" id="KOG3845">
    <property type="taxonomic scope" value="Eukaryota"/>
</dbReference>
<dbReference type="HOGENOM" id="CLU_093200_1_0_1"/>
<dbReference type="InParanoid" id="Q28918"/>
<dbReference type="OMA" id="PTPSAWI"/>
<dbReference type="OrthoDB" id="74575at2759"/>
<dbReference type="TreeFam" id="TF313869"/>
<dbReference type="Reactome" id="R-BTA-196108">
    <property type="pathway name" value="Pregnenolone biosynthesis"/>
</dbReference>
<dbReference type="Reactome" id="R-BTA-9837999">
    <property type="pathway name" value="Mitochondrial protein degradation"/>
</dbReference>
<dbReference type="UniPathway" id="UPA00296"/>
<dbReference type="Proteomes" id="UP000009136">
    <property type="component" value="Chromosome 27"/>
</dbReference>
<dbReference type="Bgee" id="ENSBTAG00000033345">
    <property type="expression patterns" value="Expressed in diaphragm and 101 other cell types or tissues"/>
</dbReference>
<dbReference type="GO" id="GO:0005739">
    <property type="term" value="C:mitochondrion"/>
    <property type="evidence" value="ECO:0007669"/>
    <property type="project" value="UniProtKB-SubCell"/>
</dbReference>
<dbReference type="GO" id="GO:0015485">
    <property type="term" value="F:cholesterol binding"/>
    <property type="evidence" value="ECO:0000318"/>
    <property type="project" value="GO_Central"/>
</dbReference>
<dbReference type="GO" id="GO:0120020">
    <property type="term" value="F:cholesterol transfer activity"/>
    <property type="evidence" value="ECO:0007669"/>
    <property type="project" value="InterPro"/>
</dbReference>
<dbReference type="GO" id="GO:0008203">
    <property type="term" value="P:cholesterol metabolic process"/>
    <property type="evidence" value="ECO:0007669"/>
    <property type="project" value="UniProtKB-UniPathway"/>
</dbReference>
<dbReference type="GO" id="GO:0032367">
    <property type="term" value="P:intracellular cholesterol transport"/>
    <property type="evidence" value="ECO:0000318"/>
    <property type="project" value="GO_Central"/>
</dbReference>
<dbReference type="GO" id="GO:0050810">
    <property type="term" value="P:regulation of steroid biosynthetic process"/>
    <property type="evidence" value="ECO:0000318"/>
    <property type="project" value="GO_Central"/>
</dbReference>
<dbReference type="GO" id="GO:0006694">
    <property type="term" value="P:steroid biosynthetic process"/>
    <property type="evidence" value="ECO:0000318"/>
    <property type="project" value="GO_Central"/>
</dbReference>
<dbReference type="CDD" id="cd08905">
    <property type="entry name" value="START_STARD1-like"/>
    <property type="match status" value="1"/>
</dbReference>
<dbReference type="FunFam" id="3.30.530.20:FF:000015">
    <property type="entry name" value="Steroidogenic acute regulatory protein, mitochondrial"/>
    <property type="match status" value="1"/>
</dbReference>
<dbReference type="Gene3D" id="3.30.530.20">
    <property type="match status" value="1"/>
</dbReference>
<dbReference type="InterPro" id="IPR029866">
    <property type="entry name" value="StAR"/>
</dbReference>
<dbReference type="InterPro" id="IPR000799">
    <property type="entry name" value="StAR-like"/>
</dbReference>
<dbReference type="InterPro" id="IPR023393">
    <property type="entry name" value="START-like_dom_sf"/>
</dbReference>
<dbReference type="InterPro" id="IPR002913">
    <property type="entry name" value="START_lipid-bd_dom"/>
</dbReference>
<dbReference type="PANTHER" id="PTHR46489">
    <property type="entry name" value="STEROIDOGENIC ACUTE REGULATORY PROTEIN, MITOCHONDRIAL"/>
    <property type="match status" value="1"/>
</dbReference>
<dbReference type="PANTHER" id="PTHR46489:SF1">
    <property type="entry name" value="STEROIDOGENIC ACUTE REGULATORY PROTEIN, MITOCHONDRIAL"/>
    <property type="match status" value="1"/>
</dbReference>
<dbReference type="Pfam" id="PF01852">
    <property type="entry name" value="START"/>
    <property type="match status" value="1"/>
</dbReference>
<dbReference type="PRINTS" id="PR00978">
    <property type="entry name" value="STARPROTEIN"/>
</dbReference>
<dbReference type="SMART" id="SM00234">
    <property type="entry name" value="START"/>
    <property type="match status" value="1"/>
</dbReference>
<dbReference type="SUPFAM" id="SSF55961">
    <property type="entry name" value="Bet v1-like"/>
    <property type="match status" value="1"/>
</dbReference>
<dbReference type="PROSITE" id="PS50848">
    <property type="entry name" value="START"/>
    <property type="match status" value="1"/>
</dbReference>
<organism>
    <name type="scientific">Bos taurus</name>
    <name type="common">Bovine</name>
    <dbReference type="NCBI Taxonomy" id="9913"/>
    <lineage>
        <taxon>Eukaryota</taxon>
        <taxon>Metazoa</taxon>
        <taxon>Chordata</taxon>
        <taxon>Craniata</taxon>
        <taxon>Vertebrata</taxon>
        <taxon>Euteleostomi</taxon>
        <taxon>Mammalia</taxon>
        <taxon>Eutheria</taxon>
        <taxon>Laurasiatheria</taxon>
        <taxon>Artiodactyla</taxon>
        <taxon>Ruminantia</taxon>
        <taxon>Pecora</taxon>
        <taxon>Bovidae</taxon>
        <taxon>Bovinae</taxon>
        <taxon>Bos</taxon>
    </lineage>
</organism>
<keyword id="KW-0445">Lipid transport</keyword>
<keyword id="KW-0446">Lipid-binding</keyword>
<keyword id="KW-0496">Mitochondrion</keyword>
<keyword id="KW-0597">Phosphoprotein</keyword>
<keyword id="KW-1185">Reference proteome</keyword>
<keyword id="KW-0755">Steroidogenesis</keyword>
<keyword id="KW-0809">Transit peptide</keyword>
<keyword id="KW-0813">Transport</keyword>
<name>STAR_BOVIN</name>
<protein>
    <recommendedName>
        <fullName>Steroidogenic acute regulatory protein, mitochondrial</fullName>
        <shortName>StAR</shortName>
    </recommendedName>
    <alternativeName>
        <fullName>START domain-containing protein 1</fullName>
        <shortName>StARD1</shortName>
    </alternativeName>
</protein>
<reference key="1">
    <citation type="journal article" date="1995" name="Biochem. Biophys. Res. Commun.">
        <title>Molecular cloning and in vivo expression of the bovine steroidogenic acute regulatory protein.</title>
        <authorList>
            <person name="Hartung S."/>
            <person name="Rust W."/>
            <person name="Balvers M."/>
            <person name="Ivell R."/>
        </authorList>
    </citation>
    <scope>NUCLEOTIDE SEQUENCE [GENOMIC DNA / MRNA]</scope>
    <source>
        <tissue>Corpus luteum</tissue>
    </source>
</reference>
<reference key="2">
    <citation type="submission" date="1998-05" db="EMBL/GenBank/DDBJ databases">
        <authorList>
            <person name="Hartung S."/>
            <person name="Rust W."/>
            <person name="Balvers M."/>
            <person name="Ivell R."/>
        </authorList>
    </citation>
    <scope>SEQUENCE REVISION TO 85 AND 174</scope>
</reference>
<reference key="3">
    <citation type="submission" date="2005-11" db="EMBL/GenBank/DDBJ databases">
        <authorList>
            <consortium name="NIH - Mammalian Gene Collection (MGC) project"/>
        </authorList>
    </citation>
    <scope>NUCLEOTIDE SEQUENCE [LARGE SCALE MRNA]</scope>
    <source>
        <strain>Crossbred X Angus</strain>
        <tissue>Liver</tissue>
    </source>
</reference>
<reference key="4">
    <citation type="journal article" date="1995" name="J. Steroid Biochem. Mol. Biol.">
        <title>Comparison of protein phosphorylation patterns produced in adrenal cells by activation of cAMP-dependent protein kinase and Ca-dependent protein kinase.</title>
        <authorList>
            <person name="Hartigan J.A."/>
            <person name="Green E.G."/>
            <person name="Mortensen R.M."/>
            <person name="Menachery A."/>
            <person name="Williams G.H."/>
            <person name="Orme-Johnson N.R."/>
        </authorList>
    </citation>
    <scope>PHOSPHORYLATION</scope>
</reference>
<gene>
    <name type="primary">STAR</name>
</gene>
<accession>Q28918</accession>
<accession>Q2YDI1</accession>
<feature type="transit peptide" description="Mitochondrion" evidence="1">
    <location>
        <begin position="1"/>
        <end position="63"/>
    </location>
</feature>
<feature type="chain" id="PRO_0000033314" description="Steroidogenic acute regulatory protein, mitochondrial">
    <location>
        <begin position="64"/>
        <end position="285"/>
    </location>
</feature>
<feature type="domain" description="START" evidence="5">
    <location>
        <begin position="67"/>
        <end position="280"/>
    </location>
</feature>
<feature type="modified residue" description="Phosphoserine; by PKA" evidence="2">
    <location>
        <position position="57"/>
    </location>
</feature>
<feature type="modified residue" description="Phosphoserine; by PKA" evidence="2">
    <location>
        <position position="195"/>
    </location>
</feature>
<feature type="sequence conflict" description="In Ref. 1; CAA76717." evidence="6" ref="1">
    <original>Y</original>
    <variation>H</variation>
    <location>
        <position position="75"/>
    </location>
</feature>
<feature type="sequence conflict" description="In Ref. 1; CAA76718." evidence="6" ref="1">
    <original>E</original>
    <variation>K</variation>
    <location>
        <position position="99"/>
    </location>
</feature>